<gene>
    <name type="primary">FRRS1</name>
    <name type="synonym">Sdfr2</name>
    <name type="synonym">Sdr2</name>
</gene>
<comment type="function">
    <text evidence="6">Ferric-chelate reductases reduce Fe(3+) to Fe(2+) before its transport from the endosome to the cytoplasm.</text>
</comment>
<comment type="cofactor">
    <cofactor evidence="1">
        <name>heme b</name>
        <dbReference type="ChEBI" id="CHEBI:60344"/>
    </cofactor>
    <text evidence="1">Binds 2 heme b groups non-covalently.</text>
</comment>
<comment type="subcellular location">
    <subcellularLocation>
        <location evidence="9">Membrane</location>
        <topology evidence="9">Multi-pass membrane protein</topology>
    </subcellularLocation>
</comment>
<comment type="tissue specificity">
    <text evidence="6 8">Expressed in spleen, liver and kidney with low expression in brain. Localizes in adult brain to the choroid plexus of the fourth, third, and lateral ventricles and to ependymal cells that line the ventricles.</text>
</comment>
<comment type="induction">
    <text evidence="6">Down-regulated in kidney and liver of mice lacking hypotransferrinemic (hpx), which have iron overload of the liver and pancreas.</text>
</comment>
<comment type="similarity">
    <text evidence="9">Belongs to the FRRS1 family.</text>
</comment>
<feature type="chain" id="PRO_0000314844" description="Ferric-chelate reductase 1">
    <location>
        <begin position="1"/>
        <end position="592"/>
    </location>
</feature>
<feature type="transmembrane region" description="Helical; Name=1" evidence="2">
    <location>
        <begin position="2"/>
        <end position="22"/>
    </location>
</feature>
<feature type="transmembrane region" description="Helical; Name=2" evidence="2">
    <location>
        <begin position="372"/>
        <end position="392"/>
    </location>
</feature>
<feature type="transmembrane region" description="Helical; Name=3" evidence="2">
    <location>
        <begin position="415"/>
        <end position="435"/>
    </location>
</feature>
<feature type="transmembrane region" description="Helical; Name=4" evidence="2">
    <location>
        <begin position="446"/>
        <end position="466"/>
    </location>
</feature>
<feature type="transmembrane region" description="Helical; Name=5" evidence="2">
    <location>
        <begin position="477"/>
        <end position="499"/>
    </location>
</feature>
<feature type="transmembrane region" description="Helical; Name=6" evidence="2">
    <location>
        <begin position="515"/>
        <end position="535"/>
    </location>
</feature>
<feature type="transmembrane region" description="Helical; Name=7" evidence="2">
    <location>
        <begin position="569"/>
        <end position="589"/>
    </location>
</feature>
<feature type="domain" description="Reelin" evidence="5">
    <location>
        <begin position="13"/>
        <end position="179"/>
    </location>
</feature>
<feature type="domain" description="DOMON" evidence="4">
    <location>
        <begin position="216"/>
        <end position="331"/>
    </location>
</feature>
<feature type="domain" description="Cytochrome b561" evidence="3">
    <location>
        <begin position="335"/>
        <end position="534"/>
    </location>
</feature>
<feature type="binding site" description="axial binding residue" evidence="1">
    <location>
        <position position="373"/>
    </location>
    <ligand>
        <name>heme b</name>
        <dbReference type="ChEBI" id="CHEBI:60344"/>
        <label>1</label>
    </ligand>
    <ligandPart>
        <name>Fe</name>
        <dbReference type="ChEBI" id="CHEBI:18248"/>
    </ligandPart>
</feature>
<feature type="binding site" description="axial binding residue" evidence="1">
    <location>
        <position position="414"/>
    </location>
    <ligand>
        <name>heme b</name>
        <dbReference type="ChEBI" id="CHEBI:60344"/>
        <label>2</label>
    </ligand>
    <ligandPart>
        <name>Fe</name>
        <dbReference type="ChEBI" id="CHEBI:18248"/>
    </ligandPart>
</feature>
<feature type="binding site" description="axial binding residue" evidence="1">
    <location>
        <position position="446"/>
    </location>
    <ligand>
        <name>heme b</name>
        <dbReference type="ChEBI" id="CHEBI:60344"/>
        <label>1</label>
    </ligand>
    <ligandPart>
        <name>Fe</name>
        <dbReference type="ChEBI" id="CHEBI:18248"/>
    </ligandPart>
</feature>
<feature type="binding site" description="axial binding residue" evidence="1">
    <location>
        <position position="482"/>
    </location>
    <ligand>
        <name>heme b</name>
        <dbReference type="ChEBI" id="CHEBI:60344"/>
        <label>2</label>
    </ligand>
    <ligandPart>
        <name>Fe</name>
        <dbReference type="ChEBI" id="CHEBI:18248"/>
    </ligandPart>
</feature>
<feature type="glycosylation site" description="N-linked (GlcNAc...) asparagine" evidence="2">
    <location>
        <position position="85"/>
    </location>
</feature>
<feature type="glycosylation site" description="N-linked (GlcNAc...) asparagine" evidence="2">
    <location>
        <position position="308"/>
    </location>
</feature>
<feature type="glycosylation site" description="N-linked (GlcNAc...) asparagine" evidence="7">
    <location>
        <position position="321"/>
    </location>
</feature>
<feature type="glycosylation site" description="N-linked (GlcNAc...) asparagine" evidence="7">
    <location>
        <position position="353"/>
    </location>
</feature>
<feature type="sequence conflict" description="In Ref. 1; BAA09055." evidence="9" ref="1">
    <original>S</original>
    <variation>R</variation>
    <location>
        <position position="9"/>
    </location>
</feature>
<feature type="sequence conflict" description="In Ref. 1; BAA09055." evidence="9" ref="1">
    <original>G</original>
    <variation>E</variation>
    <location>
        <position position="61"/>
    </location>
</feature>
<feature type="sequence conflict" description="In Ref. 2; BAE26143/BAE39395/BAE37025." evidence="9" ref="2">
    <original>E</original>
    <variation>K</variation>
    <location>
        <position position="65"/>
    </location>
</feature>
<feature type="sequence conflict" description="In Ref. 2; BAE39395/BAE37025." evidence="9" ref="2">
    <original>P</original>
    <variation>S</variation>
    <location>
        <position position="272"/>
    </location>
</feature>
<feature type="sequence conflict" description="In Ref. 2; BAE39395/BAE37025." evidence="9" ref="2">
    <original>G</original>
    <variation>S</variation>
    <location>
        <position position="299"/>
    </location>
</feature>
<feature type="sequence conflict" description="In Ref. 1; BAA09055." evidence="9" ref="1">
    <original>V</original>
    <variation>I</variation>
    <location>
        <position position="419"/>
    </location>
</feature>
<feature type="sequence conflict" description="In Ref. 1; BAA09055." evidence="9" ref="1">
    <original>A</original>
    <variation>G</variation>
    <location>
        <position position="428"/>
    </location>
</feature>
<organism>
    <name type="scientific">Mus musculus</name>
    <name type="common">Mouse</name>
    <dbReference type="NCBI Taxonomy" id="10090"/>
    <lineage>
        <taxon>Eukaryota</taxon>
        <taxon>Metazoa</taxon>
        <taxon>Chordata</taxon>
        <taxon>Craniata</taxon>
        <taxon>Vertebrata</taxon>
        <taxon>Euteleostomi</taxon>
        <taxon>Mammalia</taxon>
        <taxon>Eutheria</taxon>
        <taxon>Euarchontoglires</taxon>
        <taxon>Glires</taxon>
        <taxon>Rodentia</taxon>
        <taxon>Myomorpha</taxon>
        <taxon>Muroidea</taxon>
        <taxon>Muridae</taxon>
        <taxon>Murinae</taxon>
        <taxon>Mus</taxon>
        <taxon>Mus</taxon>
    </lineage>
</organism>
<dbReference type="EC" id="1.-.-.-"/>
<dbReference type="EMBL" id="D50464">
    <property type="protein sequence ID" value="BAA09055.1"/>
    <property type="molecule type" value="mRNA"/>
</dbReference>
<dbReference type="EMBL" id="AK144933">
    <property type="protein sequence ID" value="BAE26143.1"/>
    <property type="molecule type" value="mRNA"/>
</dbReference>
<dbReference type="EMBL" id="AK162693">
    <property type="protein sequence ID" value="BAE37025.1"/>
    <property type="molecule type" value="mRNA"/>
</dbReference>
<dbReference type="EMBL" id="AK167289">
    <property type="protein sequence ID" value="BAE39395.1"/>
    <property type="molecule type" value="mRNA"/>
</dbReference>
<dbReference type="EMBL" id="BC027770">
    <property type="protein sequence ID" value="AAH27770.1"/>
    <property type="molecule type" value="mRNA"/>
</dbReference>
<dbReference type="CCDS" id="CCDS17792.1"/>
<dbReference type="RefSeq" id="NP_001106950.1">
    <property type="nucleotide sequence ID" value="NM_001113478.1"/>
</dbReference>
<dbReference type="RefSeq" id="NP_033172.2">
    <property type="nucleotide sequence ID" value="NM_009146.3"/>
</dbReference>
<dbReference type="SMR" id="Q8K385"/>
<dbReference type="BioGRID" id="203144">
    <property type="interactions" value="3"/>
</dbReference>
<dbReference type="FunCoup" id="Q8K385">
    <property type="interactions" value="6"/>
</dbReference>
<dbReference type="STRING" id="10090.ENSMUSP00000143255"/>
<dbReference type="GlyConnect" id="2311">
    <property type="glycosylation" value="1 N-Linked glycan (1 site)"/>
</dbReference>
<dbReference type="GlyCosmos" id="Q8K385">
    <property type="glycosylation" value="4 sites, 1 glycan"/>
</dbReference>
<dbReference type="GlyGen" id="Q8K385">
    <property type="glycosylation" value="7 sites, 3 N-linked glycans (3 sites), 1 O-linked glycan (2 sites)"/>
</dbReference>
<dbReference type="iPTMnet" id="Q8K385"/>
<dbReference type="PhosphoSitePlus" id="Q8K385"/>
<dbReference type="PaxDb" id="10090-ENSMUSP00000039487"/>
<dbReference type="PeptideAtlas" id="Q8K385"/>
<dbReference type="ProteomicsDB" id="271636"/>
<dbReference type="Pumba" id="Q8K385"/>
<dbReference type="DNASU" id="20321"/>
<dbReference type="GeneID" id="20321"/>
<dbReference type="KEGG" id="mmu:20321"/>
<dbReference type="UCSC" id="uc008rcv.2">
    <property type="organism name" value="mouse"/>
</dbReference>
<dbReference type="AGR" id="MGI:108076"/>
<dbReference type="CTD" id="391059"/>
<dbReference type="MGI" id="MGI:108076">
    <property type="gene designation" value="Frrs1"/>
</dbReference>
<dbReference type="eggNOG" id="KOG4293">
    <property type="taxonomic scope" value="Eukaryota"/>
</dbReference>
<dbReference type="InParanoid" id="Q8K385"/>
<dbReference type="OrthoDB" id="6372137at2759"/>
<dbReference type="PhylomeDB" id="Q8K385"/>
<dbReference type="TreeFam" id="TF316169"/>
<dbReference type="BioGRID-ORCS" id="20321">
    <property type="hits" value="1 hit in 77 CRISPR screens"/>
</dbReference>
<dbReference type="ChiTaRS" id="Frrs1">
    <property type="organism name" value="mouse"/>
</dbReference>
<dbReference type="PRO" id="PR:Q8K385"/>
<dbReference type="Proteomes" id="UP000000589">
    <property type="component" value="Unplaced"/>
</dbReference>
<dbReference type="RNAct" id="Q8K385">
    <property type="molecule type" value="protein"/>
</dbReference>
<dbReference type="GO" id="GO:0016020">
    <property type="term" value="C:membrane"/>
    <property type="evidence" value="ECO:0007669"/>
    <property type="project" value="UniProtKB-SubCell"/>
</dbReference>
<dbReference type="GO" id="GO:0046872">
    <property type="term" value="F:metal ion binding"/>
    <property type="evidence" value="ECO:0007669"/>
    <property type="project" value="UniProtKB-KW"/>
</dbReference>
<dbReference type="GO" id="GO:0016722">
    <property type="term" value="F:oxidoreductase activity, acting on metal ions"/>
    <property type="evidence" value="ECO:0000314"/>
    <property type="project" value="UniProtKB"/>
</dbReference>
<dbReference type="GO" id="GO:0006879">
    <property type="term" value="P:intracellular iron ion homeostasis"/>
    <property type="evidence" value="ECO:0000314"/>
    <property type="project" value="ARUK-UCL"/>
</dbReference>
<dbReference type="CDD" id="cd08760">
    <property type="entry name" value="Cyt_b561_FRRS1_like"/>
    <property type="match status" value="1"/>
</dbReference>
<dbReference type="CDD" id="cd09628">
    <property type="entry name" value="DOMON_SDR_2_like"/>
    <property type="match status" value="1"/>
</dbReference>
<dbReference type="CDD" id="cd08544">
    <property type="entry name" value="Reeler"/>
    <property type="match status" value="1"/>
</dbReference>
<dbReference type="FunFam" id="2.60.40.4060:FF:000003">
    <property type="entry name" value="Ferric chelate reductase 1"/>
    <property type="match status" value="1"/>
</dbReference>
<dbReference type="Gene3D" id="1.20.120.1770">
    <property type="match status" value="1"/>
</dbReference>
<dbReference type="Gene3D" id="2.60.40.4060">
    <property type="entry name" value="Reeler domain"/>
    <property type="match status" value="1"/>
</dbReference>
<dbReference type="InterPro" id="IPR006593">
    <property type="entry name" value="Cyt_b561/ferric_Rdtase_TM"/>
</dbReference>
<dbReference type="InterPro" id="IPR005018">
    <property type="entry name" value="DOMON_domain"/>
</dbReference>
<dbReference type="InterPro" id="IPR051237">
    <property type="entry name" value="Ferric-chelate_Red/DefProt"/>
</dbReference>
<dbReference type="InterPro" id="IPR002861">
    <property type="entry name" value="Reeler_dom"/>
</dbReference>
<dbReference type="InterPro" id="IPR042307">
    <property type="entry name" value="Reeler_sf"/>
</dbReference>
<dbReference type="PANTHER" id="PTHR45828">
    <property type="entry name" value="CYTOCHROME B561/FERRIC REDUCTASE TRANSMEMBRANE"/>
    <property type="match status" value="1"/>
</dbReference>
<dbReference type="PANTHER" id="PTHR45828:SF3">
    <property type="entry name" value="FERRIC-CHELATE REDUCTASE 1"/>
    <property type="match status" value="1"/>
</dbReference>
<dbReference type="Pfam" id="PF03351">
    <property type="entry name" value="DOMON"/>
    <property type="match status" value="1"/>
</dbReference>
<dbReference type="Pfam" id="PF02014">
    <property type="entry name" value="Reeler"/>
    <property type="match status" value="1"/>
</dbReference>
<dbReference type="SMART" id="SM00665">
    <property type="entry name" value="B561"/>
    <property type="match status" value="1"/>
</dbReference>
<dbReference type="SMART" id="SM00664">
    <property type="entry name" value="DoH"/>
    <property type="match status" value="1"/>
</dbReference>
<dbReference type="PROSITE" id="PS50939">
    <property type="entry name" value="CYTOCHROME_B561"/>
    <property type="match status" value="1"/>
</dbReference>
<dbReference type="PROSITE" id="PS50836">
    <property type="entry name" value="DOMON"/>
    <property type="match status" value="1"/>
</dbReference>
<dbReference type="PROSITE" id="PS51019">
    <property type="entry name" value="REELIN"/>
    <property type="match status" value="1"/>
</dbReference>
<protein>
    <recommendedName>
        <fullName>Ferric-chelate reductase 1</fullName>
        <ecNumber>1.-.-.-</ecNumber>
    </recommendedName>
    <alternativeName>
        <fullName>Stromal cell-derived receptor 2</fullName>
        <shortName>SDR-2</shortName>
    </alternativeName>
</protein>
<evidence type="ECO:0000250" key="1">
    <source>
        <dbReference type="UniProtKB" id="Q53TN4"/>
    </source>
</evidence>
<evidence type="ECO:0000255" key="2"/>
<evidence type="ECO:0000255" key="3">
    <source>
        <dbReference type="PROSITE-ProRule" id="PRU00242"/>
    </source>
</evidence>
<evidence type="ECO:0000255" key="4">
    <source>
        <dbReference type="PROSITE-ProRule" id="PRU00246"/>
    </source>
</evidence>
<evidence type="ECO:0000255" key="5">
    <source>
        <dbReference type="PROSITE-ProRule" id="PRU00363"/>
    </source>
</evidence>
<evidence type="ECO:0000269" key="6">
    <source>
    </source>
</evidence>
<evidence type="ECO:0000269" key="7">
    <source>
    </source>
</evidence>
<evidence type="ECO:0000269" key="8">
    <source>
    </source>
</evidence>
<evidence type="ECO:0000305" key="9"/>
<accession>Q8K385</accession>
<accession>P97301</accession>
<accession>Q3TJV0</accession>
<accession>Q3UMF5</accession>
<reference key="1">
    <citation type="journal article" date="1996" name="Genomics">
        <title>Characterization of novel secreted and membrane proteins isolated by the signal sequence trap method.</title>
        <authorList>
            <person name="Shirozu M."/>
            <person name="Tada H."/>
            <person name="Tashiro K."/>
            <person name="Nakamura T."/>
            <person name="Lopez N.D."/>
            <person name="Nazarea M."/>
            <person name="Hamada T."/>
            <person name="Sato T."/>
            <person name="Nakano T."/>
            <person name="Honjo T."/>
        </authorList>
    </citation>
    <scope>NUCLEOTIDE SEQUENCE [MRNA]</scope>
    <scope>TISSUE SPECIFICITY</scope>
</reference>
<reference key="2">
    <citation type="journal article" date="2005" name="Science">
        <title>The transcriptional landscape of the mammalian genome.</title>
        <authorList>
            <person name="Carninci P."/>
            <person name="Kasukawa T."/>
            <person name="Katayama S."/>
            <person name="Gough J."/>
            <person name="Frith M.C."/>
            <person name="Maeda N."/>
            <person name="Oyama R."/>
            <person name="Ravasi T."/>
            <person name="Lenhard B."/>
            <person name="Wells C."/>
            <person name="Kodzius R."/>
            <person name="Shimokawa K."/>
            <person name="Bajic V.B."/>
            <person name="Brenner S.E."/>
            <person name="Batalov S."/>
            <person name="Forrest A.R."/>
            <person name="Zavolan M."/>
            <person name="Davis M.J."/>
            <person name="Wilming L.G."/>
            <person name="Aidinis V."/>
            <person name="Allen J.E."/>
            <person name="Ambesi-Impiombato A."/>
            <person name="Apweiler R."/>
            <person name="Aturaliya R.N."/>
            <person name="Bailey T.L."/>
            <person name="Bansal M."/>
            <person name="Baxter L."/>
            <person name="Beisel K.W."/>
            <person name="Bersano T."/>
            <person name="Bono H."/>
            <person name="Chalk A.M."/>
            <person name="Chiu K.P."/>
            <person name="Choudhary V."/>
            <person name="Christoffels A."/>
            <person name="Clutterbuck D.R."/>
            <person name="Crowe M.L."/>
            <person name="Dalla E."/>
            <person name="Dalrymple B.P."/>
            <person name="de Bono B."/>
            <person name="Della Gatta G."/>
            <person name="di Bernardo D."/>
            <person name="Down T."/>
            <person name="Engstrom P."/>
            <person name="Fagiolini M."/>
            <person name="Faulkner G."/>
            <person name="Fletcher C.F."/>
            <person name="Fukushima T."/>
            <person name="Furuno M."/>
            <person name="Futaki S."/>
            <person name="Gariboldi M."/>
            <person name="Georgii-Hemming P."/>
            <person name="Gingeras T.R."/>
            <person name="Gojobori T."/>
            <person name="Green R.E."/>
            <person name="Gustincich S."/>
            <person name="Harbers M."/>
            <person name="Hayashi Y."/>
            <person name="Hensch T.K."/>
            <person name="Hirokawa N."/>
            <person name="Hill D."/>
            <person name="Huminiecki L."/>
            <person name="Iacono M."/>
            <person name="Ikeo K."/>
            <person name="Iwama A."/>
            <person name="Ishikawa T."/>
            <person name="Jakt M."/>
            <person name="Kanapin A."/>
            <person name="Katoh M."/>
            <person name="Kawasawa Y."/>
            <person name="Kelso J."/>
            <person name="Kitamura H."/>
            <person name="Kitano H."/>
            <person name="Kollias G."/>
            <person name="Krishnan S.P."/>
            <person name="Kruger A."/>
            <person name="Kummerfeld S.K."/>
            <person name="Kurochkin I.V."/>
            <person name="Lareau L.F."/>
            <person name="Lazarevic D."/>
            <person name="Lipovich L."/>
            <person name="Liu J."/>
            <person name="Liuni S."/>
            <person name="McWilliam S."/>
            <person name="Madan Babu M."/>
            <person name="Madera M."/>
            <person name="Marchionni L."/>
            <person name="Matsuda H."/>
            <person name="Matsuzawa S."/>
            <person name="Miki H."/>
            <person name="Mignone F."/>
            <person name="Miyake S."/>
            <person name="Morris K."/>
            <person name="Mottagui-Tabar S."/>
            <person name="Mulder N."/>
            <person name="Nakano N."/>
            <person name="Nakauchi H."/>
            <person name="Ng P."/>
            <person name="Nilsson R."/>
            <person name="Nishiguchi S."/>
            <person name="Nishikawa S."/>
            <person name="Nori F."/>
            <person name="Ohara O."/>
            <person name="Okazaki Y."/>
            <person name="Orlando V."/>
            <person name="Pang K.C."/>
            <person name="Pavan W.J."/>
            <person name="Pavesi G."/>
            <person name="Pesole G."/>
            <person name="Petrovsky N."/>
            <person name="Piazza S."/>
            <person name="Reed J."/>
            <person name="Reid J.F."/>
            <person name="Ring B.Z."/>
            <person name="Ringwald M."/>
            <person name="Rost B."/>
            <person name="Ruan Y."/>
            <person name="Salzberg S.L."/>
            <person name="Sandelin A."/>
            <person name="Schneider C."/>
            <person name="Schoenbach C."/>
            <person name="Sekiguchi K."/>
            <person name="Semple C.A."/>
            <person name="Seno S."/>
            <person name="Sessa L."/>
            <person name="Sheng Y."/>
            <person name="Shibata Y."/>
            <person name="Shimada H."/>
            <person name="Shimada K."/>
            <person name="Silva D."/>
            <person name="Sinclair B."/>
            <person name="Sperling S."/>
            <person name="Stupka E."/>
            <person name="Sugiura K."/>
            <person name="Sultana R."/>
            <person name="Takenaka Y."/>
            <person name="Taki K."/>
            <person name="Tammoja K."/>
            <person name="Tan S.L."/>
            <person name="Tang S."/>
            <person name="Taylor M.S."/>
            <person name="Tegner J."/>
            <person name="Teichmann S.A."/>
            <person name="Ueda H.R."/>
            <person name="van Nimwegen E."/>
            <person name="Verardo R."/>
            <person name="Wei C.L."/>
            <person name="Yagi K."/>
            <person name="Yamanishi H."/>
            <person name="Zabarovsky E."/>
            <person name="Zhu S."/>
            <person name="Zimmer A."/>
            <person name="Hide W."/>
            <person name="Bult C."/>
            <person name="Grimmond S.M."/>
            <person name="Teasdale R.D."/>
            <person name="Liu E.T."/>
            <person name="Brusic V."/>
            <person name="Quackenbush J."/>
            <person name="Wahlestedt C."/>
            <person name="Mattick J.S."/>
            <person name="Hume D.A."/>
            <person name="Kai C."/>
            <person name="Sasaki D."/>
            <person name="Tomaru Y."/>
            <person name="Fukuda S."/>
            <person name="Kanamori-Katayama M."/>
            <person name="Suzuki M."/>
            <person name="Aoki J."/>
            <person name="Arakawa T."/>
            <person name="Iida J."/>
            <person name="Imamura K."/>
            <person name="Itoh M."/>
            <person name="Kato T."/>
            <person name="Kawaji H."/>
            <person name="Kawagashira N."/>
            <person name="Kawashima T."/>
            <person name="Kojima M."/>
            <person name="Kondo S."/>
            <person name="Konno H."/>
            <person name="Nakano K."/>
            <person name="Ninomiya N."/>
            <person name="Nishio T."/>
            <person name="Okada M."/>
            <person name="Plessy C."/>
            <person name="Shibata K."/>
            <person name="Shiraki T."/>
            <person name="Suzuki S."/>
            <person name="Tagami M."/>
            <person name="Waki K."/>
            <person name="Watahiki A."/>
            <person name="Okamura-Oho Y."/>
            <person name="Suzuki H."/>
            <person name="Kawai J."/>
            <person name="Hayashizaki Y."/>
        </authorList>
    </citation>
    <scope>NUCLEOTIDE SEQUENCE [LARGE SCALE MRNA]</scope>
    <source>
        <strain>C57BL/6J</strain>
        <tissue>Mammary gland</tissue>
        <tissue>Vagina</tissue>
    </source>
</reference>
<reference key="3">
    <citation type="journal article" date="2004" name="Genome Res.">
        <title>The status, quality, and expansion of the NIH full-length cDNA project: the Mammalian Gene Collection (MGC).</title>
        <authorList>
            <consortium name="The MGC Project Team"/>
        </authorList>
    </citation>
    <scope>NUCLEOTIDE SEQUENCE [LARGE SCALE MRNA]</scope>
    <source>
        <strain>FVB/N</strain>
        <tissue>Mammary tumor</tissue>
    </source>
</reference>
<reference key="4">
    <citation type="journal article" date="2003" name="Biochim. Biophys. Acta">
        <title>Stromal cell-derived receptor 2 and cytochrome b561 are functional ferric reductases.</title>
        <authorList>
            <person name="Vargas J.D."/>
            <person name="Herpers B."/>
            <person name="McKie A.T."/>
            <person name="Gledhill S."/>
            <person name="McDonnell J."/>
            <person name="van den Heuvel M."/>
            <person name="Davies K.E."/>
            <person name="Ponting C.P."/>
        </authorList>
    </citation>
    <scope>FUNCTION</scope>
    <scope>ENZYME ACTIVITY</scope>
    <scope>TISSUE SPECIFICITY</scope>
    <scope>INDUCTION</scope>
</reference>
<reference key="5">
    <citation type="journal article" date="2009" name="Nat. Biotechnol.">
        <title>Mass-spectrometric identification and relative quantification of N-linked cell surface glycoproteins.</title>
        <authorList>
            <person name="Wollscheid B."/>
            <person name="Bausch-Fluck D."/>
            <person name="Henderson C."/>
            <person name="O'Brien R."/>
            <person name="Bibel M."/>
            <person name="Schiess R."/>
            <person name="Aebersold R."/>
            <person name="Watts J.D."/>
        </authorList>
    </citation>
    <scope>GLYCOSYLATION [LARGE SCALE ANALYSIS] AT ASN-321 AND ASN-353</scope>
</reference>
<reference key="6">
    <citation type="journal article" date="2010" name="Cell">
        <title>A tissue-specific atlas of mouse protein phosphorylation and expression.</title>
        <authorList>
            <person name="Huttlin E.L."/>
            <person name="Jedrychowski M.P."/>
            <person name="Elias J.E."/>
            <person name="Goswami T."/>
            <person name="Rad R."/>
            <person name="Beausoleil S.A."/>
            <person name="Villen J."/>
            <person name="Haas W."/>
            <person name="Sowa M.E."/>
            <person name="Gygi S.P."/>
        </authorList>
    </citation>
    <scope>IDENTIFICATION BY MASS SPECTROMETRY [LARGE SCALE ANALYSIS]</scope>
    <source>
        <tissue>Kidney</tissue>
        <tissue>Liver</tissue>
    </source>
</reference>
<name>FRRS1_MOUSE</name>
<sequence length="592" mass="66047">MAAPQITLSVLVIALLTCSVTAYPNGKVPMSCGGMIPQHNHSPQSEPIHQITVSQTTFKPGDQIEVTLSGPPFRGFLLEARDAENLSGPPIGSFTLIDSEESQLLTCTDVQGLAVSHTRSSKKTEIKVYWDAPSPAPDHIRFLATVVQKFKIYWVKIPSPVISQPNAPPFTTPKATTQPLTTPPSVSHLTKPFSAFECGNKKFCVRSPLNCDPEKEPACVFLSFTRDNQSVMVEMSGPSDGYVSFAFSHDQWMGDDDAYLCIREDQTVDIQPSYLTGRSYPVMDSRGTLEDMAWRLADGVIQCSFRRNITLPEAKNRFVLNESYYIFFAEGPSHDGRIFRHSQQPLITYEKYNVTDTPKSVGGSRSSPLLKAHGALMFVAWMTTVSIGVLVARFFRSVWSKAFFLREAAWFQVHRMLMVATSLLTCVAFVLPFVYRGGWSWRAGYHPYLGCTVMTLAVLQPLLATFRPPLHDPRRQVFNWTHWSVGTAARIIAVAAMFLGMDLPGLNLPSPQKTYAMMGFVVWHIGTEVILEIHAYRLSRKVEILDNDRIQILQSLTVAEAEGHVFKKVVLAVYICGNVIFLSIFLSAINHI</sequence>
<proteinExistence type="evidence at protein level"/>
<keyword id="KW-0249">Electron transport</keyword>
<keyword id="KW-0325">Glycoprotein</keyword>
<keyword id="KW-0349">Heme</keyword>
<keyword id="KW-0408">Iron</keyword>
<keyword id="KW-0472">Membrane</keyword>
<keyword id="KW-0479">Metal-binding</keyword>
<keyword id="KW-0560">Oxidoreductase</keyword>
<keyword id="KW-1185">Reference proteome</keyword>
<keyword id="KW-0812">Transmembrane</keyword>
<keyword id="KW-1133">Transmembrane helix</keyword>
<keyword id="KW-0813">Transport</keyword>